<dbReference type="EMBL" id="AE016820">
    <property type="protein sequence ID" value="AAS54561.1"/>
    <property type="molecule type" value="Genomic_DNA"/>
</dbReference>
<dbReference type="RefSeq" id="NP_986737.1">
    <property type="nucleotide sequence ID" value="NM_211799.1"/>
</dbReference>
<dbReference type="FunCoup" id="Q74ZY6">
    <property type="interactions" value="27"/>
</dbReference>
<dbReference type="STRING" id="284811.Q74ZY6"/>
<dbReference type="EnsemblFungi" id="AAS54561">
    <property type="protein sequence ID" value="AAS54561"/>
    <property type="gene ID" value="AGOS_AGR072W"/>
</dbReference>
<dbReference type="GeneID" id="4623038"/>
<dbReference type="KEGG" id="ago:AGOS_AGR072W"/>
<dbReference type="eggNOG" id="ENOG502S416">
    <property type="taxonomic scope" value="Eukaryota"/>
</dbReference>
<dbReference type="HOGENOM" id="CLU_142363_1_0_1"/>
<dbReference type="InParanoid" id="Q74ZY6"/>
<dbReference type="OMA" id="KPATHDE"/>
<dbReference type="OrthoDB" id="2234316at2759"/>
<dbReference type="Proteomes" id="UP000000591">
    <property type="component" value="Chromosome VII"/>
</dbReference>
<dbReference type="CDD" id="cd23996">
    <property type="entry name" value="LCL2-like"/>
    <property type="match status" value="1"/>
</dbReference>
<dbReference type="InterPro" id="IPR034543">
    <property type="entry name" value="LCL2"/>
</dbReference>
<dbReference type="PANTHER" id="PTHR38425">
    <property type="entry name" value="LONG CHRONOLOGICAL LIFESPAN PROTEIN 2"/>
    <property type="match status" value="1"/>
</dbReference>
<dbReference type="PANTHER" id="PTHR38425:SF1">
    <property type="entry name" value="LONG CHRONOLOGICAL LIFESPAN PROTEIN 2"/>
    <property type="match status" value="1"/>
</dbReference>
<accession>Q74ZY6</accession>
<proteinExistence type="inferred from homology"/>
<organism>
    <name type="scientific">Eremothecium gossypii (strain ATCC 10895 / CBS 109.51 / FGSC 9923 / NRRL Y-1056)</name>
    <name type="common">Yeast</name>
    <name type="synonym">Ashbya gossypii</name>
    <dbReference type="NCBI Taxonomy" id="284811"/>
    <lineage>
        <taxon>Eukaryota</taxon>
        <taxon>Fungi</taxon>
        <taxon>Dikarya</taxon>
        <taxon>Ascomycota</taxon>
        <taxon>Saccharomycotina</taxon>
        <taxon>Saccharomycetes</taxon>
        <taxon>Saccharomycetales</taxon>
        <taxon>Saccharomycetaceae</taxon>
        <taxon>Eremothecium</taxon>
    </lineage>
</organism>
<evidence type="ECO:0000250" key="1"/>
<evidence type="ECO:0000255" key="2"/>
<evidence type="ECO:0000305" key="3"/>
<sequence length="126" mass="13996">MIAHLIVALLAMPVQSFFFDFGGHQAQQQTQQTTSYEDSVLNSDCKGYVCPYTNECSRGPEECSCPFPRSQLRCVLPNKQVVCISKPATNDKKLNDVYDDTAKGPRARNKGVRDCGWVEAAYKGLV</sequence>
<comment type="function">
    <text evidence="1">Probable component of the endoplasmic reticulum-associated degradation (ERAD) pathway.</text>
</comment>
<comment type="similarity">
    <text evidence="3">Belongs to the LCL2 family.</text>
</comment>
<name>LCL2_EREGS</name>
<gene>
    <name type="primary">LCL2</name>
    <name type="ordered locus">AGR072W</name>
    <name type="ORF">AGOS_AGR072W</name>
</gene>
<protein>
    <recommendedName>
        <fullName>Long chronological lifespan protein 2</fullName>
    </recommendedName>
</protein>
<feature type="signal peptide" evidence="2">
    <location>
        <begin position="1"/>
        <end position="16"/>
    </location>
</feature>
<feature type="chain" id="PRO_0000408590" description="Long chronological lifespan protein 2">
    <location>
        <begin position="17"/>
        <end position="126"/>
    </location>
</feature>
<reference key="1">
    <citation type="journal article" date="2004" name="Science">
        <title>The Ashbya gossypii genome as a tool for mapping the ancient Saccharomyces cerevisiae genome.</title>
        <authorList>
            <person name="Dietrich F.S."/>
            <person name="Voegeli S."/>
            <person name="Brachat S."/>
            <person name="Lerch A."/>
            <person name="Gates K."/>
            <person name="Steiner S."/>
            <person name="Mohr C."/>
            <person name="Poehlmann R."/>
            <person name="Luedi P."/>
            <person name="Choi S."/>
            <person name="Wing R.A."/>
            <person name="Flavier A."/>
            <person name="Gaffney T.D."/>
            <person name="Philippsen P."/>
        </authorList>
    </citation>
    <scope>NUCLEOTIDE SEQUENCE [LARGE SCALE GENOMIC DNA]</scope>
    <source>
        <strain>ATCC 10895 / CBS 109.51 / FGSC 9923 / NRRL Y-1056</strain>
    </source>
</reference>
<reference key="2">
    <citation type="journal article" date="2013" name="G3 (Bethesda)">
        <title>Genomes of Ashbya fungi isolated from insects reveal four mating-type loci, numerous translocations, lack of transposons, and distinct gene duplications.</title>
        <authorList>
            <person name="Dietrich F.S."/>
            <person name="Voegeli S."/>
            <person name="Kuo S."/>
            <person name="Philippsen P."/>
        </authorList>
    </citation>
    <scope>GENOME REANNOTATION</scope>
    <source>
        <strain>ATCC 10895 / CBS 109.51 / FGSC 9923 / NRRL Y-1056</strain>
    </source>
</reference>
<keyword id="KW-1185">Reference proteome</keyword>
<keyword id="KW-0732">Signal</keyword>